<feature type="initiator methionine" description="Removed">
    <location>
        <position position="1"/>
    </location>
</feature>
<feature type="chain" id="PRO_0000443011" description="Actin, nonmuscle, intermediate form" evidence="1">
    <location>
        <begin position="2"/>
        <end position="376"/>
    </location>
</feature>
<feature type="chain" id="PRO_0000443012" description="Actin, nonmuscle" evidence="5">
    <location>
        <begin position="3"/>
        <end position="376"/>
    </location>
</feature>
<feature type="modified residue" description="N-acetylcysteine; in intermediate form" evidence="1">
    <location>
        <position position="2"/>
    </location>
</feature>
<feature type="modified residue" description="N-acetylaspartate; in Actin, nonmuscle" evidence="5">
    <location>
        <position position="3"/>
    </location>
</feature>
<feature type="modified residue" description="Methionine (R)-sulfoxide" evidence="4">
    <location>
        <position position="45"/>
    </location>
</feature>
<feature type="modified residue" description="Methionine (R)-sulfoxide" evidence="4">
    <location>
        <position position="48"/>
    </location>
</feature>
<feature type="modified residue" description="Tele-methylhistidine" evidence="2">
    <location>
        <position position="74"/>
    </location>
</feature>
<feature type="modified residue" description="N6-methyllysine" evidence="3">
    <location>
        <position position="85"/>
    </location>
</feature>
<dbReference type="EC" id="3.6.4.-" evidence="6"/>
<dbReference type="EMBL" id="D45164">
    <property type="protein sequence ID" value="BAA08112.1"/>
    <property type="molecule type" value="Genomic_DNA"/>
</dbReference>
<dbReference type="SMR" id="P53461"/>
<dbReference type="GO" id="GO:0005737">
    <property type="term" value="C:cytoplasm"/>
    <property type="evidence" value="ECO:0007669"/>
    <property type="project" value="UniProtKB-KW"/>
</dbReference>
<dbReference type="GO" id="GO:0005856">
    <property type="term" value="C:cytoskeleton"/>
    <property type="evidence" value="ECO:0007669"/>
    <property type="project" value="UniProtKB-SubCell"/>
</dbReference>
<dbReference type="GO" id="GO:0005524">
    <property type="term" value="F:ATP binding"/>
    <property type="evidence" value="ECO:0007669"/>
    <property type="project" value="UniProtKB-KW"/>
</dbReference>
<dbReference type="GO" id="GO:0016787">
    <property type="term" value="F:hydrolase activity"/>
    <property type="evidence" value="ECO:0007669"/>
    <property type="project" value="UniProtKB-KW"/>
</dbReference>
<dbReference type="CDD" id="cd10224">
    <property type="entry name" value="ASKHA_NBD_actin"/>
    <property type="match status" value="1"/>
</dbReference>
<dbReference type="FunFam" id="3.30.420.40:FF:000131">
    <property type="entry name" value="Actin, alpha skeletal muscle"/>
    <property type="match status" value="1"/>
</dbReference>
<dbReference type="FunFam" id="3.30.420.40:FF:000291">
    <property type="entry name" value="Actin, alpha skeletal muscle"/>
    <property type="match status" value="1"/>
</dbReference>
<dbReference type="FunFam" id="3.90.640.10:FF:000047">
    <property type="entry name" value="Actin, alpha skeletal muscle"/>
    <property type="match status" value="1"/>
</dbReference>
<dbReference type="FunFam" id="3.30.420.40:FF:000058">
    <property type="entry name" value="Putative actin-related protein 5"/>
    <property type="match status" value="1"/>
</dbReference>
<dbReference type="Gene3D" id="3.30.420.40">
    <property type="match status" value="2"/>
</dbReference>
<dbReference type="Gene3D" id="3.90.640.10">
    <property type="entry name" value="Actin, Chain A, domain 4"/>
    <property type="match status" value="1"/>
</dbReference>
<dbReference type="InterPro" id="IPR004000">
    <property type="entry name" value="Actin"/>
</dbReference>
<dbReference type="InterPro" id="IPR020902">
    <property type="entry name" value="Actin/actin-like_CS"/>
</dbReference>
<dbReference type="InterPro" id="IPR004001">
    <property type="entry name" value="Actin_CS"/>
</dbReference>
<dbReference type="InterPro" id="IPR043129">
    <property type="entry name" value="ATPase_NBD"/>
</dbReference>
<dbReference type="PANTHER" id="PTHR11937">
    <property type="entry name" value="ACTIN"/>
    <property type="match status" value="1"/>
</dbReference>
<dbReference type="Pfam" id="PF00022">
    <property type="entry name" value="Actin"/>
    <property type="match status" value="1"/>
</dbReference>
<dbReference type="PRINTS" id="PR00190">
    <property type="entry name" value="ACTIN"/>
</dbReference>
<dbReference type="SMART" id="SM00268">
    <property type="entry name" value="ACTIN"/>
    <property type="match status" value="1"/>
</dbReference>
<dbReference type="SUPFAM" id="SSF53067">
    <property type="entry name" value="Actin-like ATPase domain"/>
    <property type="match status" value="2"/>
</dbReference>
<dbReference type="PROSITE" id="PS00406">
    <property type="entry name" value="ACTINS_1"/>
    <property type="match status" value="1"/>
</dbReference>
<dbReference type="PROSITE" id="PS00432">
    <property type="entry name" value="ACTINS_2"/>
    <property type="match status" value="1"/>
</dbReference>
<dbReference type="PROSITE" id="PS01132">
    <property type="entry name" value="ACTINS_ACT_LIKE"/>
    <property type="match status" value="1"/>
</dbReference>
<comment type="function">
    <text>Actins are highly conserved proteins that are involved in various types of cell motility and are ubiquitously expressed in all eukaryotic cells.</text>
</comment>
<comment type="catalytic activity">
    <reaction evidence="6">
        <text>ATP + H2O = ADP + phosphate + H(+)</text>
        <dbReference type="Rhea" id="RHEA:13065"/>
        <dbReference type="ChEBI" id="CHEBI:15377"/>
        <dbReference type="ChEBI" id="CHEBI:15378"/>
        <dbReference type="ChEBI" id="CHEBI:30616"/>
        <dbReference type="ChEBI" id="CHEBI:43474"/>
        <dbReference type="ChEBI" id="CHEBI:456216"/>
    </reaction>
</comment>
<comment type="subcellular location">
    <subcellularLocation>
        <location>Cytoplasm</location>
        <location>Cytoskeleton</location>
    </subcellularLocation>
</comment>
<comment type="PTM">
    <text evidence="4">Oxidation of Met-45 and Met-48 by MICALs (MICAL1, MICAL2 or MICAL3) to form methionine sulfoxide promotes actin filament depolymerization. MICAL1 and MICAL2 produce the (R)-S-oxide form. The (R)-S-oxide form is reverted by MSRB1 and MSRB2, which promotes actin repolymerization.</text>
</comment>
<comment type="PTM">
    <text evidence="3">Monomethylation at Lys-85 (K85me1) regulates actin-myosin interaction and actomyosin-dependent processes. Demethylation by ALKBH4 is required for maintaining actomyosin dynamics supporting normal cleavage furrow ingression during cytokinesis and cell migration.</text>
</comment>
<comment type="similarity">
    <text evidence="7">Belongs to the actin family.</text>
</comment>
<proteinExistence type="inferred from homology"/>
<reference key="1">
    <citation type="journal article" date="1997" name="J. Mol. Evol.">
        <title>Evolution of chordate actin genes: evidence from genomic organization and amino acid sequences.</title>
        <authorList>
            <person name="Kusakabe T."/>
            <person name="Araki I."/>
            <person name="Satoh N."/>
            <person name="Jeffery W.R."/>
        </authorList>
    </citation>
    <scope>NUCLEOTIDE SEQUENCE [GENOMIC DNA]</scope>
    <source>
        <tissue>Gonad</tissue>
    </source>
</reference>
<keyword id="KW-0007">Acetylation</keyword>
<keyword id="KW-0067">ATP-binding</keyword>
<keyword id="KW-0963">Cytoplasm</keyword>
<keyword id="KW-0206">Cytoskeleton</keyword>
<keyword id="KW-0378">Hydrolase</keyword>
<keyword id="KW-0488">Methylation</keyword>
<keyword id="KW-0547">Nucleotide-binding</keyword>
<keyword id="KW-0558">Oxidation</keyword>
<accession>P53461</accession>
<sequence length="376" mass="41802">MCDEDVAALVVDNGSGMCKAGFAGDDAPRAVFPSIVGRPRHQGVMVGMGQKDSYVGDEAQSKRGILTLKYPIEHGIVTNWDDMEKIWHHTFYNELRVAPEEHPVLLTEAPLNPKANREKMTQIMFETFNTPAMYVAIQAVLSLYASGRTTGIVFDSGDGVSHTVPIYEGYALPHAILRLDLAGRDLTDYLMKILTERGYSFTTTAEREIVRDIKEKLAYVALDFETEMQTAATSSSIEKSYELPDGQVITVGNERFRCPEALFQPSFLGMESAGIHETTYNSIMKCDVDIRKDLYANTVLSGGSTMFPGIADRMQKEIVALAPPTMKIKIIAPPERKYSVWIGGSILASLSTFQQMWISKQEYDESGPSIVHRKCF</sequence>
<organism>
    <name type="scientific">Halocynthia roretzi</name>
    <name type="common">Sea squirt</name>
    <name type="synonym">Cynthia roretzi</name>
    <dbReference type="NCBI Taxonomy" id="7729"/>
    <lineage>
        <taxon>Eukaryota</taxon>
        <taxon>Metazoa</taxon>
        <taxon>Chordata</taxon>
        <taxon>Tunicata</taxon>
        <taxon>Ascidiacea</taxon>
        <taxon>Stolidobranchia</taxon>
        <taxon>Pyuridae</taxon>
        <taxon>Halocynthia</taxon>
    </lineage>
</organism>
<protein>
    <recommendedName>
        <fullName>Actin, nonmuscle</fullName>
        <ecNumber evidence="6">3.6.4.-</ecNumber>
    </recommendedName>
    <component>
        <recommendedName>
            <fullName>Actin, nonmuscle, intermediate form</fullName>
        </recommendedName>
    </component>
</protein>
<evidence type="ECO:0000250" key="1">
    <source>
        <dbReference type="UniProtKB" id="P62737"/>
    </source>
</evidence>
<evidence type="ECO:0000250" key="2">
    <source>
        <dbReference type="UniProtKB" id="P62739"/>
    </source>
</evidence>
<evidence type="ECO:0000250" key="3">
    <source>
        <dbReference type="UniProtKB" id="P68032"/>
    </source>
</evidence>
<evidence type="ECO:0000250" key="4">
    <source>
        <dbReference type="UniProtKB" id="P68033"/>
    </source>
</evidence>
<evidence type="ECO:0000250" key="5">
    <source>
        <dbReference type="UniProtKB" id="P68135"/>
    </source>
</evidence>
<evidence type="ECO:0000250" key="6">
    <source>
        <dbReference type="UniProtKB" id="P68137"/>
    </source>
</evidence>
<evidence type="ECO:0000305" key="7"/>
<name>ACTC_HALRO</name>
<gene>
    <name type="primary">CA1</name>
</gene>